<dbReference type="EC" id="2.7.4.3" evidence="1"/>
<dbReference type="EMBL" id="CR954246">
    <property type="protein sequence ID" value="CAI86283.1"/>
    <property type="molecule type" value="Genomic_DNA"/>
</dbReference>
<dbReference type="SMR" id="Q3IKQ1"/>
<dbReference type="STRING" id="326442.PSHAa1208"/>
<dbReference type="KEGG" id="pha:PSHAa1208"/>
<dbReference type="eggNOG" id="COG0563">
    <property type="taxonomic scope" value="Bacteria"/>
</dbReference>
<dbReference type="HOGENOM" id="CLU_032354_1_2_6"/>
<dbReference type="BioCyc" id="PHAL326442:PSHA_RS05960-MONOMER"/>
<dbReference type="UniPathway" id="UPA00588">
    <property type="reaction ID" value="UER00649"/>
</dbReference>
<dbReference type="Proteomes" id="UP000006843">
    <property type="component" value="Chromosome I"/>
</dbReference>
<dbReference type="GO" id="GO:0005737">
    <property type="term" value="C:cytoplasm"/>
    <property type="evidence" value="ECO:0007669"/>
    <property type="project" value="UniProtKB-SubCell"/>
</dbReference>
<dbReference type="GO" id="GO:0004017">
    <property type="term" value="F:adenylate kinase activity"/>
    <property type="evidence" value="ECO:0007669"/>
    <property type="project" value="UniProtKB-UniRule"/>
</dbReference>
<dbReference type="GO" id="GO:0005524">
    <property type="term" value="F:ATP binding"/>
    <property type="evidence" value="ECO:0007669"/>
    <property type="project" value="UniProtKB-UniRule"/>
</dbReference>
<dbReference type="GO" id="GO:0044209">
    <property type="term" value="P:AMP salvage"/>
    <property type="evidence" value="ECO:0007669"/>
    <property type="project" value="UniProtKB-UniRule"/>
</dbReference>
<dbReference type="CDD" id="cd01428">
    <property type="entry name" value="ADK"/>
    <property type="match status" value="1"/>
</dbReference>
<dbReference type="FunFam" id="3.40.50.300:FF:000106">
    <property type="entry name" value="Adenylate kinase mitochondrial"/>
    <property type="match status" value="1"/>
</dbReference>
<dbReference type="Gene3D" id="3.40.50.300">
    <property type="entry name" value="P-loop containing nucleotide triphosphate hydrolases"/>
    <property type="match status" value="1"/>
</dbReference>
<dbReference type="HAMAP" id="MF_00235">
    <property type="entry name" value="Adenylate_kinase_Adk"/>
    <property type="match status" value="1"/>
</dbReference>
<dbReference type="InterPro" id="IPR006259">
    <property type="entry name" value="Adenyl_kin_sub"/>
</dbReference>
<dbReference type="InterPro" id="IPR000850">
    <property type="entry name" value="Adenylat/UMP-CMP_kin"/>
</dbReference>
<dbReference type="InterPro" id="IPR033690">
    <property type="entry name" value="Adenylat_kinase_CS"/>
</dbReference>
<dbReference type="InterPro" id="IPR007862">
    <property type="entry name" value="Adenylate_kinase_lid-dom"/>
</dbReference>
<dbReference type="InterPro" id="IPR027417">
    <property type="entry name" value="P-loop_NTPase"/>
</dbReference>
<dbReference type="NCBIfam" id="TIGR01351">
    <property type="entry name" value="adk"/>
    <property type="match status" value="1"/>
</dbReference>
<dbReference type="NCBIfam" id="NF001379">
    <property type="entry name" value="PRK00279.1-1"/>
    <property type="match status" value="1"/>
</dbReference>
<dbReference type="NCBIfam" id="NF001380">
    <property type="entry name" value="PRK00279.1-2"/>
    <property type="match status" value="1"/>
</dbReference>
<dbReference type="NCBIfam" id="NF001381">
    <property type="entry name" value="PRK00279.1-3"/>
    <property type="match status" value="1"/>
</dbReference>
<dbReference type="PANTHER" id="PTHR23359">
    <property type="entry name" value="NUCLEOTIDE KINASE"/>
    <property type="match status" value="1"/>
</dbReference>
<dbReference type="Pfam" id="PF00406">
    <property type="entry name" value="ADK"/>
    <property type="match status" value="1"/>
</dbReference>
<dbReference type="Pfam" id="PF05191">
    <property type="entry name" value="ADK_lid"/>
    <property type="match status" value="1"/>
</dbReference>
<dbReference type="PRINTS" id="PR00094">
    <property type="entry name" value="ADENYLTKNASE"/>
</dbReference>
<dbReference type="SUPFAM" id="SSF52540">
    <property type="entry name" value="P-loop containing nucleoside triphosphate hydrolases"/>
    <property type="match status" value="1"/>
</dbReference>
<dbReference type="PROSITE" id="PS00113">
    <property type="entry name" value="ADENYLATE_KINASE"/>
    <property type="match status" value="1"/>
</dbReference>
<comment type="function">
    <text evidence="1">Catalyzes the reversible transfer of the terminal phosphate group between ATP and AMP. Plays an important role in cellular energy homeostasis and in adenine nucleotide metabolism.</text>
</comment>
<comment type="catalytic activity">
    <reaction evidence="1">
        <text>AMP + ATP = 2 ADP</text>
        <dbReference type="Rhea" id="RHEA:12973"/>
        <dbReference type="ChEBI" id="CHEBI:30616"/>
        <dbReference type="ChEBI" id="CHEBI:456215"/>
        <dbReference type="ChEBI" id="CHEBI:456216"/>
        <dbReference type="EC" id="2.7.4.3"/>
    </reaction>
</comment>
<comment type="pathway">
    <text evidence="1">Purine metabolism; AMP biosynthesis via salvage pathway; AMP from ADP: step 1/1.</text>
</comment>
<comment type="subunit">
    <text evidence="1">Monomer.</text>
</comment>
<comment type="subcellular location">
    <subcellularLocation>
        <location evidence="1">Cytoplasm</location>
    </subcellularLocation>
</comment>
<comment type="domain">
    <text evidence="1">Consists of three domains, a large central CORE domain and two small peripheral domains, NMPbind and LID, which undergo movements during catalysis. The LID domain closes over the site of phosphoryl transfer upon ATP binding. Assembling and dissambling the active center during each catalytic cycle provides an effective means to prevent ATP hydrolysis.</text>
</comment>
<comment type="similarity">
    <text evidence="1">Belongs to the adenylate kinase family.</text>
</comment>
<protein>
    <recommendedName>
        <fullName evidence="1">Adenylate kinase</fullName>
        <shortName evidence="1">AK</shortName>
        <ecNumber evidence="1">2.7.4.3</ecNumber>
    </recommendedName>
    <alternativeName>
        <fullName evidence="1">ATP-AMP transphosphorylase</fullName>
    </alternativeName>
    <alternativeName>
        <fullName evidence="1">ATP:AMP phosphotransferase</fullName>
    </alternativeName>
    <alternativeName>
        <fullName evidence="1">Adenylate monophosphate kinase</fullName>
    </alternativeName>
</protein>
<organism>
    <name type="scientific">Pseudoalteromonas translucida (strain TAC 125)</name>
    <dbReference type="NCBI Taxonomy" id="326442"/>
    <lineage>
        <taxon>Bacteria</taxon>
        <taxon>Pseudomonadati</taxon>
        <taxon>Pseudomonadota</taxon>
        <taxon>Gammaproteobacteria</taxon>
        <taxon>Alteromonadales</taxon>
        <taxon>Pseudoalteromonadaceae</taxon>
        <taxon>Pseudoalteromonas</taxon>
    </lineage>
</organism>
<feature type="chain" id="PRO_1000021759" description="Adenylate kinase">
    <location>
        <begin position="1"/>
        <end position="214"/>
    </location>
</feature>
<feature type="region of interest" description="NMP" evidence="1">
    <location>
        <begin position="30"/>
        <end position="59"/>
    </location>
</feature>
<feature type="region of interest" description="LID" evidence="1">
    <location>
        <begin position="122"/>
        <end position="159"/>
    </location>
</feature>
<feature type="binding site" evidence="1">
    <location>
        <begin position="10"/>
        <end position="15"/>
    </location>
    <ligand>
        <name>ATP</name>
        <dbReference type="ChEBI" id="CHEBI:30616"/>
    </ligand>
</feature>
<feature type="binding site" evidence="1">
    <location>
        <position position="31"/>
    </location>
    <ligand>
        <name>AMP</name>
        <dbReference type="ChEBI" id="CHEBI:456215"/>
    </ligand>
</feature>
<feature type="binding site" evidence="1">
    <location>
        <position position="36"/>
    </location>
    <ligand>
        <name>AMP</name>
        <dbReference type="ChEBI" id="CHEBI:456215"/>
    </ligand>
</feature>
<feature type="binding site" evidence="1">
    <location>
        <begin position="57"/>
        <end position="59"/>
    </location>
    <ligand>
        <name>AMP</name>
        <dbReference type="ChEBI" id="CHEBI:456215"/>
    </ligand>
</feature>
<feature type="binding site" evidence="1">
    <location>
        <begin position="85"/>
        <end position="88"/>
    </location>
    <ligand>
        <name>AMP</name>
        <dbReference type="ChEBI" id="CHEBI:456215"/>
    </ligand>
</feature>
<feature type="binding site" evidence="1">
    <location>
        <position position="92"/>
    </location>
    <ligand>
        <name>AMP</name>
        <dbReference type="ChEBI" id="CHEBI:456215"/>
    </ligand>
</feature>
<feature type="binding site" evidence="1">
    <location>
        <position position="123"/>
    </location>
    <ligand>
        <name>ATP</name>
        <dbReference type="ChEBI" id="CHEBI:30616"/>
    </ligand>
</feature>
<feature type="binding site" evidence="1">
    <location>
        <begin position="132"/>
        <end position="133"/>
    </location>
    <ligand>
        <name>ATP</name>
        <dbReference type="ChEBI" id="CHEBI:30616"/>
    </ligand>
</feature>
<feature type="binding site" evidence="1">
    <location>
        <position position="156"/>
    </location>
    <ligand>
        <name>AMP</name>
        <dbReference type="ChEBI" id="CHEBI:456215"/>
    </ligand>
</feature>
<feature type="binding site" evidence="1">
    <location>
        <position position="167"/>
    </location>
    <ligand>
        <name>AMP</name>
        <dbReference type="ChEBI" id="CHEBI:456215"/>
    </ligand>
</feature>
<feature type="binding site" evidence="1">
    <location>
        <position position="200"/>
    </location>
    <ligand>
        <name>ATP</name>
        <dbReference type="ChEBI" id="CHEBI:30616"/>
    </ligand>
</feature>
<evidence type="ECO:0000255" key="1">
    <source>
        <dbReference type="HAMAP-Rule" id="MF_00235"/>
    </source>
</evidence>
<sequence length="214" mass="23376">MRIILLGAPGAGKGTQAQYLMDKYGIPQISTGDMLRAAIKEGTPLGLEAKKVMDAGQLISDDIIIGLVKERITKADCENGFLLDGFPRTIPQADAMKENGVVVDHVIEFDVADEVIVERMGGRRVHPGSGRVYHVVYNPPKVADKDNETGEELIIRADDTEETVRKRLGIYHEQTMPLVDYYQAEAAAGNTQYHKLDGTQAVDAISKQLGELLG</sequence>
<name>KAD_PSET1</name>
<proteinExistence type="inferred from homology"/>
<keyword id="KW-0067">ATP-binding</keyword>
<keyword id="KW-0963">Cytoplasm</keyword>
<keyword id="KW-0418">Kinase</keyword>
<keyword id="KW-0545">Nucleotide biosynthesis</keyword>
<keyword id="KW-0547">Nucleotide-binding</keyword>
<keyword id="KW-1185">Reference proteome</keyword>
<keyword id="KW-0808">Transferase</keyword>
<accession>Q3IKQ1</accession>
<reference key="1">
    <citation type="journal article" date="2005" name="Genome Res.">
        <title>Coping with cold: the genome of the versatile marine Antarctica bacterium Pseudoalteromonas haloplanktis TAC125.</title>
        <authorList>
            <person name="Medigue C."/>
            <person name="Krin E."/>
            <person name="Pascal G."/>
            <person name="Barbe V."/>
            <person name="Bernsel A."/>
            <person name="Bertin P.N."/>
            <person name="Cheung F."/>
            <person name="Cruveiller S."/>
            <person name="D'Amico S."/>
            <person name="Duilio A."/>
            <person name="Fang G."/>
            <person name="Feller G."/>
            <person name="Ho C."/>
            <person name="Mangenot S."/>
            <person name="Marino G."/>
            <person name="Nilsson J."/>
            <person name="Parrilli E."/>
            <person name="Rocha E.P.C."/>
            <person name="Rouy Z."/>
            <person name="Sekowska A."/>
            <person name="Tutino M.L."/>
            <person name="Vallenet D."/>
            <person name="von Heijne G."/>
            <person name="Danchin A."/>
        </authorList>
    </citation>
    <scope>NUCLEOTIDE SEQUENCE [LARGE SCALE GENOMIC DNA]</scope>
    <source>
        <strain>TAC 125</strain>
    </source>
</reference>
<gene>
    <name evidence="1" type="primary">adk</name>
    <name type="ordered locus">PSHAa1208</name>
</gene>